<sequence length="591" mass="66991">MSVSLVVIRLELAGHSPVPTDFGFSAAAGEMSDEEIKKKTLASAVACLEGKSAGEKAAIIHQHLGRREMTDVIIETMKARADEVRDTVEEKKPSAAPVSAQRSREQSESVNTAPESPSKQLPDQISFFSGNPSVEIVHGIMHLYKTNKMTSLKEDVRRSAMLCVLTVPATMTSHDLMKFVAPFNDVIEQMKIIRDSTPNQYMVLIKFSAQADADSFYMACNGRQFNSIEDDVCQLVYVERAEVLKSEDGASLPVMDLTELPKCTVCLERMDESVNGILTTLCNHSFHSQCLQRWDDTTCPVCRYCQTPEPVEENKCFECGVQENLWICLICGHIGCGRYVSRHAYKHFEETQHTYAMQLTNHRVWDYAGDNYVHRLVASKTDGKIVQYECEGDTCQEEKIDALQLEYSYLLTSQLESQRIYWENKIVRIEKDTAEEINNMKTKFKETIEKCDSLELRLSDLLKEKQSVERKCTQLNTRVAKLSTELQEEQELNKCLRANQLVLQNQLKEEEKLLKETCAQKDLQITEIQEQLRDVMFYLETQQQISHLPAETRQEIQEGQINIAMASAPNPPSSGAGGKLQSRKGRSKRGK</sequence>
<keyword id="KW-0025">Alternative splicing</keyword>
<keyword id="KW-0175">Coiled coil</keyword>
<keyword id="KW-0963">Cytoplasm</keyword>
<keyword id="KW-0479">Metal-binding</keyword>
<keyword id="KW-0597">Phosphoprotein</keyword>
<keyword id="KW-1185">Reference proteome</keyword>
<keyword id="KW-0808">Transferase</keyword>
<keyword id="KW-0833">Ubl conjugation pathway</keyword>
<keyword id="KW-0862">Zinc</keyword>
<keyword id="KW-0863">Zinc-finger</keyword>
<comment type="function">
    <text evidence="1">Negatively regulates MAP kinase activation by limiting the formation of Raf/MEK complexes probably by inactivation of the KSR1 scaffold protein. Also acts as a Ras responsive E3 ubiquitin ligase that, on activation of Ras, is modified by auto-polyubiquitination resulting in the release of inhibition of Raf/MEK complex formation. May also act as a cytoplasmic retention protein with a role in regulating nuclear transport (By similarity).</text>
</comment>
<comment type="catalytic activity">
    <reaction evidence="1">
        <text>S-ubiquitinyl-[E2 ubiquitin-conjugating enzyme]-L-cysteine + [acceptor protein]-L-lysine = [E2 ubiquitin-conjugating enzyme]-L-cysteine + N(6)-ubiquitinyl-[acceptor protein]-L-lysine.</text>
        <dbReference type="EC" id="2.3.2.27"/>
    </reaction>
</comment>
<comment type="pathway">
    <text>Protein modification; protein ubiquitination.</text>
</comment>
<comment type="subunit">
    <text evidence="1">Interacts with the nuclear localization signal of BRCA1 and with the N-terminal of KSR1. The C-terminal portion of BRCA1 interacts with DDB1.</text>
</comment>
<comment type="interaction">
    <interactant intactId="EBI-10818333">
        <id>Q99MP8</id>
    </interactant>
    <interactant intactId="EBI-9033539">
        <id>O88987</id>
        <label>Akap3</label>
    </interactant>
    <organismsDiffer>false</organismsDiffer>
    <experiments>3</experiments>
</comment>
<comment type="subcellular location">
    <subcellularLocation>
        <location evidence="1">Cytoplasm</location>
    </subcellularLocation>
</comment>
<comment type="alternative products">
    <event type="alternative splicing"/>
    <isoform>
        <id>Q99MP8-1</id>
        <name evidence="6">1</name>
        <name evidence="6">alpha</name>
        <sequence type="displayed"/>
    </isoform>
    <isoform>
        <id>Q99MP8-2</id>
        <name evidence="6">2</name>
        <name evidence="6">beta</name>
        <sequence type="described" ref="VSP_050761"/>
    </isoform>
    <isoform>
        <id>Q99MP8-3</id>
        <name evidence="9">3</name>
        <sequence type="described" ref="VSP_050762"/>
    </isoform>
</comment>
<comment type="tissue specificity">
    <text evidence="6">Isoform 2 is highly expressed in testis, lower levels in brain, heart, lung, stomach, colon, uterus, liver and kidney. Isoform 1 is only expressed in the testis. Isoform 2 is predominant over isoform 1 in both fetal and adult testis.</text>
</comment>
<comment type="sequence caution" evidence="9">
    <conflict type="erroneous initiation">
        <sequence resource="EMBL-CDS" id="BAB29036"/>
    </conflict>
</comment>
<protein>
    <recommendedName>
        <fullName>BRCA1-associated protein</fullName>
        <ecNumber evidence="1">2.3.2.27</ecNumber>
    </recommendedName>
    <alternativeName>
        <fullName>BRAP2</fullName>
    </alternativeName>
    <alternativeName>
        <fullName>Impedes mitogenic signal propagation</fullName>
        <shortName>IMP</shortName>
    </alternativeName>
    <alternativeName>
        <fullName evidence="9">RING-type E3 ubiquitin transferase BRAP2</fullName>
    </alternativeName>
</protein>
<feature type="chain" id="PRO_0000055826" description="BRCA1-associated protein">
    <location>
        <begin position="1"/>
        <end position="591"/>
    </location>
</feature>
<feature type="zinc finger region" description="RING-type" evidence="3 9">
    <location>
        <begin position="263"/>
        <end position="303"/>
    </location>
</feature>
<feature type="zinc finger region" description="UBP-type; degenerate" evidence="4">
    <location>
        <begin position="300"/>
        <end position="392"/>
    </location>
</feature>
<feature type="region of interest" description="Disordered" evidence="5">
    <location>
        <begin position="82"/>
        <end position="124"/>
    </location>
</feature>
<feature type="region of interest" description="Disordered" evidence="5">
    <location>
        <begin position="563"/>
        <end position="591"/>
    </location>
</feature>
<feature type="coiled-coil region" evidence="2">
    <location>
        <begin position="430"/>
        <end position="536"/>
    </location>
</feature>
<feature type="compositionally biased region" description="Basic and acidic residues" evidence="5">
    <location>
        <begin position="82"/>
        <end position="93"/>
    </location>
</feature>
<feature type="compositionally biased region" description="Polar residues" evidence="5">
    <location>
        <begin position="108"/>
        <end position="124"/>
    </location>
</feature>
<feature type="compositionally biased region" description="Basic residues" evidence="5">
    <location>
        <begin position="581"/>
        <end position="591"/>
    </location>
</feature>
<feature type="binding site" evidence="4">
    <location>
        <position position="316"/>
    </location>
    <ligand>
        <name>Zn(2+)</name>
        <dbReference type="ChEBI" id="CHEBI:29105"/>
        <label>1</label>
    </ligand>
</feature>
<feature type="binding site" evidence="4">
    <location>
        <position position="319"/>
    </location>
    <ligand>
        <name>Zn(2+)</name>
        <dbReference type="ChEBI" id="CHEBI:29105"/>
        <label>1</label>
    </ligand>
</feature>
<feature type="binding site" evidence="4">
    <location>
        <position position="328"/>
    </location>
    <ligand>
        <name>Zn(2+)</name>
        <dbReference type="ChEBI" id="CHEBI:29105"/>
        <label>2</label>
    </ligand>
</feature>
<feature type="binding site" evidence="4">
    <location>
        <position position="331"/>
    </location>
    <ligand>
        <name>Zn(2+)</name>
        <dbReference type="ChEBI" id="CHEBI:29105"/>
        <label>2</label>
    </ligand>
</feature>
<feature type="binding site" evidence="4">
    <location>
        <position position="336"/>
    </location>
    <ligand>
        <name>Zn(2+)</name>
        <dbReference type="ChEBI" id="CHEBI:29105"/>
        <label>1</label>
    </ligand>
</feature>
<feature type="binding site" evidence="4">
    <location>
        <position position="343"/>
    </location>
    <ligand>
        <name>Zn(2+)</name>
        <dbReference type="ChEBI" id="CHEBI:29105"/>
        <label>1</label>
    </ligand>
</feature>
<feature type="binding site" evidence="4">
    <location>
        <position position="347"/>
    </location>
    <ligand>
        <name>Zn(2+)</name>
        <dbReference type="ChEBI" id="CHEBI:29105"/>
        <label>2</label>
    </ligand>
</feature>
<feature type="binding site" evidence="4">
    <location>
        <position position="353"/>
    </location>
    <ligand>
        <name>Zn(2+)</name>
        <dbReference type="ChEBI" id="CHEBI:29105"/>
        <label>2</label>
    </ligand>
</feature>
<feature type="modified residue" description="Phosphoserine" evidence="1">
    <location>
        <position position="52"/>
    </location>
</feature>
<feature type="modified residue" description="Phosphoserine" evidence="1">
    <location>
        <position position="116"/>
    </location>
</feature>
<feature type="modified residue" description="Phosphoserine" evidence="1">
    <location>
        <position position="118"/>
    </location>
</feature>
<feature type="splice variant" id="VSP_050762" description="In isoform 3." evidence="8">
    <location>
        <begin position="1"/>
        <end position="217"/>
    </location>
</feature>
<feature type="splice variant" id="VSP_050761" description="In isoform 2." evidence="7">
    <location>
        <begin position="1"/>
        <end position="30"/>
    </location>
</feature>
<feature type="sequence conflict" description="In Ref. 3." evidence="9" ref="3">
    <original>N</original>
    <variation>I</variation>
    <location>
        <position position="111"/>
    </location>
</feature>
<evidence type="ECO:0000250" key="1">
    <source>
        <dbReference type="UniProtKB" id="Q7Z569"/>
    </source>
</evidence>
<evidence type="ECO:0000255" key="2"/>
<evidence type="ECO:0000255" key="3">
    <source>
        <dbReference type="PROSITE-ProRule" id="PRU00175"/>
    </source>
</evidence>
<evidence type="ECO:0000255" key="4">
    <source>
        <dbReference type="PROSITE-ProRule" id="PRU00502"/>
    </source>
</evidence>
<evidence type="ECO:0000256" key="5">
    <source>
        <dbReference type="SAM" id="MobiDB-lite"/>
    </source>
</evidence>
<evidence type="ECO:0000269" key="6">
    <source>
    </source>
</evidence>
<evidence type="ECO:0000303" key="7">
    <source>
    </source>
</evidence>
<evidence type="ECO:0000303" key="8">
    <source>
    </source>
</evidence>
<evidence type="ECO:0000305" key="9"/>
<evidence type="ECO:0000312" key="10">
    <source>
        <dbReference type="EMBL" id="AAH38490.1"/>
    </source>
</evidence>
<evidence type="ECO:0000312" key="11">
    <source>
        <dbReference type="EMBL" id="AAK28079.1"/>
    </source>
</evidence>
<evidence type="ECO:0000312" key="12">
    <source>
        <dbReference type="MGI" id="MGI:1919649"/>
    </source>
</evidence>
<proteinExistence type="evidence at protein level"/>
<accession>Q99MP8</accession>
<accession>Q8CC00</accession>
<accession>Q8CHX1</accession>
<accession>Q99MP7</accession>
<accession>Q9CXX8</accession>
<organism evidence="11">
    <name type="scientific">Mus musculus</name>
    <name type="common">Mouse</name>
    <dbReference type="NCBI Taxonomy" id="10090"/>
    <lineage>
        <taxon>Eukaryota</taxon>
        <taxon>Metazoa</taxon>
        <taxon>Chordata</taxon>
        <taxon>Craniata</taxon>
        <taxon>Vertebrata</taxon>
        <taxon>Euteleostomi</taxon>
        <taxon>Mammalia</taxon>
        <taxon>Eutheria</taxon>
        <taxon>Euarchontoglires</taxon>
        <taxon>Glires</taxon>
        <taxon>Rodentia</taxon>
        <taxon>Myomorpha</taxon>
        <taxon>Muroidea</taxon>
        <taxon>Muridae</taxon>
        <taxon>Murinae</taxon>
        <taxon>Mus</taxon>
        <taxon>Mus</taxon>
    </lineage>
</organism>
<dbReference type="EC" id="2.3.2.27" evidence="1"/>
<dbReference type="EMBL" id="AF321920">
    <property type="protein sequence ID" value="AAK28079.1"/>
    <property type="molecule type" value="mRNA"/>
</dbReference>
<dbReference type="EMBL" id="AF321921">
    <property type="protein sequence ID" value="AAK28080.1"/>
    <property type="molecule type" value="mRNA"/>
</dbReference>
<dbReference type="EMBL" id="BC038490">
    <property type="protein sequence ID" value="AAH38490.1"/>
    <property type="molecule type" value="mRNA"/>
</dbReference>
<dbReference type="EMBL" id="AK013885">
    <property type="protein sequence ID" value="BAB29036.1"/>
    <property type="status" value="ALT_INIT"/>
    <property type="molecule type" value="mRNA"/>
</dbReference>
<dbReference type="EMBL" id="AK034212">
    <property type="protein sequence ID" value="BAC28633.1"/>
    <property type="molecule type" value="mRNA"/>
</dbReference>
<dbReference type="CCDS" id="CCDS19640.1">
    <molecule id="Q99MP8-1"/>
</dbReference>
<dbReference type="CCDS" id="CCDS80389.1">
    <molecule id="Q99MP8-2"/>
</dbReference>
<dbReference type="RefSeq" id="NP_001276473.1">
    <molecule id="Q99MP8-2"/>
    <property type="nucleotide sequence ID" value="NM_001289544.1"/>
</dbReference>
<dbReference type="RefSeq" id="NP_082503.2">
    <molecule id="Q99MP8-1"/>
    <property type="nucleotide sequence ID" value="NM_028227.3"/>
</dbReference>
<dbReference type="RefSeq" id="XP_006530532.1">
    <property type="nucleotide sequence ID" value="XM_006530469.1"/>
</dbReference>
<dbReference type="RefSeq" id="XP_036021420.1">
    <molecule id="Q99MP8-3"/>
    <property type="nucleotide sequence ID" value="XM_036165527.1"/>
</dbReference>
<dbReference type="SMR" id="Q99MP8"/>
<dbReference type="BioGRID" id="215356">
    <property type="interactions" value="16"/>
</dbReference>
<dbReference type="FunCoup" id="Q99MP8">
    <property type="interactions" value="4623"/>
</dbReference>
<dbReference type="IntAct" id="Q99MP8">
    <property type="interactions" value="3"/>
</dbReference>
<dbReference type="STRING" id="10090.ENSMUSP00000031414"/>
<dbReference type="iPTMnet" id="Q99MP8"/>
<dbReference type="PhosphoSitePlus" id="Q99MP8"/>
<dbReference type="SwissPalm" id="Q99MP8"/>
<dbReference type="jPOST" id="Q99MP8"/>
<dbReference type="PaxDb" id="10090-ENSMUSP00000031414"/>
<dbReference type="PeptideAtlas" id="Q99MP8"/>
<dbReference type="ProteomicsDB" id="273796">
    <molecule id="Q99MP8-1"/>
</dbReference>
<dbReference type="ProteomicsDB" id="273797">
    <molecule id="Q99MP8-2"/>
</dbReference>
<dbReference type="ProteomicsDB" id="273798">
    <molecule id="Q99MP8-3"/>
</dbReference>
<dbReference type="Pumba" id="Q99MP8"/>
<dbReference type="Antibodypedia" id="31107">
    <property type="antibodies" value="193 antibodies from 30 providers"/>
</dbReference>
<dbReference type="DNASU" id="72399"/>
<dbReference type="Ensembl" id="ENSMUST00000031414.15">
    <molecule id="Q99MP8-1"/>
    <property type="protein sequence ID" value="ENSMUSP00000031414.9"/>
    <property type="gene ID" value="ENSMUSG00000029458.15"/>
</dbReference>
<dbReference type="Ensembl" id="ENSMUST00000111765.8">
    <molecule id="Q99MP8-2"/>
    <property type="protein sequence ID" value="ENSMUSP00000107395.2"/>
    <property type="gene ID" value="ENSMUSG00000029458.15"/>
</dbReference>
<dbReference type="GeneID" id="72399"/>
<dbReference type="KEGG" id="mmu:72399"/>
<dbReference type="UCSC" id="uc008zkc.2">
    <molecule id="Q99MP8-1"/>
    <property type="organism name" value="mouse"/>
</dbReference>
<dbReference type="AGR" id="MGI:1919649"/>
<dbReference type="CTD" id="8315"/>
<dbReference type="MGI" id="MGI:1919649">
    <property type="gene designation" value="Brap"/>
</dbReference>
<dbReference type="VEuPathDB" id="HostDB:ENSMUSG00000029458"/>
<dbReference type="eggNOG" id="KOG0804">
    <property type="taxonomic scope" value="Eukaryota"/>
</dbReference>
<dbReference type="GeneTree" id="ENSGT00500000044909"/>
<dbReference type="HOGENOM" id="CLU_009969_3_0_1"/>
<dbReference type="InParanoid" id="Q99MP8"/>
<dbReference type="OMA" id="RFNSIEP"/>
<dbReference type="OrthoDB" id="273556at2759"/>
<dbReference type="PhylomeDB" id="Q99MP8"/>
<dbReference type="TreeFam" id="TF313622"/>
<dbReference type="Reactome" id="R-MMU-5673000">
    <property type="pathway name" value="RAF activation"/>
</dbReference>
<dbReference type="Reactome" id="R-MMU-5675221">
    <property type="pathway name" value="Negative regulation of MAPK pathway"/>
</dbReference>
<dbReference type="UniPathway" id="UPA00143"/>
<dbReference type="BioGRID-ORCS" id="72399">
    <property type="hits" value="18 hits in 78 CRISPR screens"/>
</dbReference>
<dbReference type="ChiTaRS" id="Brap">
    <property type="organism name" value="mouse"/>
</dbReference>
<dbReference type="PRO" id="PR:Q99MP8"/>
<dbReference type="Proteomes" id="UP000000589">
    <property type="component" value="Chromosome 5"/>
</dbReference>
<dbReference type="RNAct" id="Q99MP8">
    <property type="molecule type" value="protein"/>
</dbReference>
<dbReference type="Bgee" id="ENSMUSG00000029458">
    <property type="expression patterns" value="Expressed in spermatid and 261 other cell types or tissues"/>
</dbReference>
<dbReference type="ExpressionAtlas" id="Q99MP8">
    <property type="expression patterns" value="baseline and differential"/>
</dbReference>
<dbReference type="GO" id="GO:0005737">
    <property type="term" value="C:cytoplasm"/>
    <property type="evidence" value="ECO:0000266"/>
    <property type="project" value="MGI"/>
</dbReference>
<dbReference type="GO" id="GO:0005829">
    <property type="term" value="C:cytosol"/>
    <property type="evidence" value="ECO:0007669"/>
    <property type="project" value="Ensembl"/>
</dbReference>
<dbReference type="GO" id="GO:0031965">
    <property type="term" value="C:nuclear membrane"/>
    <property type="evidence" value="ECO:0007669"/>
    <property type="project" value="Ensembl"/>
</dbReference>
<dbReference type="GO" id="GO:0005654">
    <property type="term" value="C:nucleoplasm"/>
    <property type="evidence" value="ECO:0007669"/>
    <property type="project" value="Ensembl"/>
</dbReference>
<dbReference type="GO" id="GO:0000151">
    <property type="term" value="C:ubiquitin ligase complex"/>
    <property type="evidence" value="ECO:0000266"/>
    <property type="project" value="MGI"/>
</dbReference>
<dbReference type="GO" id="GO:0042802">
    <property type="term" value="F:identical protein binding"/>
    <property type="evidence" value="ECO:0007669"/>
    <property type="project" value="Ensembl"/>
</dbReference>
<dbReference type="GO" id="GO:0008139">
    <property type="term" value="F:nuclear localization sequence binding"/>
    <property type="evidence" value="ECO:0000266"/>
    <property type="project" value="MGI"/>
</dbReference>
<dbReference type="GO" id="GO:0003676">
    <property type="term" value="F:nucleic acid binding"/>
    <property type="evidence" value="ECO:0007669"/>
    <property type="project" value="InterPro"/>
</dbReference>
<dbReference type="GO" id="GO:0061630">
    <property type="term" value="F:ubiquitin protein ligase activity"/>
    <property type="evidence" value="ECO:0000266"/>
    <property type="project" value="MGI"/>
</dbReference>
<dbReference type="GO" id="GO:0008270">
    <property type="term" value="F:zinc ion binding"/>
    <property type="evidence" value="ECO:0007669"/>
    <property type="project" value="UniProtKB-KW"/>
</dbReference>
<dbReference type="GO" id="GO:0000165">
    <property type="term" value="P:MAPK cascade"/>
    <property type="evidence" value="ECO:0000266"/>
    <property type="project" value="MGI"/>
</dbReference>
<dbReference type="GO" id="GO:0009968">
    <property type="term" value="P:negative regulation of signal transduction"/>
    <property type="evidence" value="ECO:0007669"/>
    <property type="project" value="Ensembl"/>
</dbReference>
<dbReference type="GO" id="GO:0016567">
    <property type="term" value="P:protein ubiquitination"/>
    <property type="evidence" value="ECO:0007669"/>
    <property type="project" value="UniProtKB-UniPathway"/>
</dbReference>
<dbReference type="GO" id="GO:0007265">
    <property type="term" value="P:Ras protein signal transduction"/>
    <property type="evidence" value="ECO:0000266"/>
    <property type="project" value="MGI"/>
</dbReference>
<dbReference type="CDD" id="cd16457">
    <property type="entry name" value="RING-H2_BRAP2"/>
    <property type="match status" value="1"/>
</dbReference>
<dbReference type="CDD" id="cd12718">
    <property type="entry name" value="RRM_BRAP2"/>
    <property type="match status" value="1"/>
</dbReference>
<dbReference type="FunFam" id="3.30.40.10:FF:000206">
    <property type="entry name" value="BRCA1-associated protein isoform X1"/>
    <property type="match status" value="1"/>
</dbReference>
<dbReference type="FunFam" id="3.30.40.10:FF:000159">
    <property type="entry name" value="BRCA1-associated protein-like"/>
    <property type="match status" value="1"/>
</dbReference>
<dbReference type="Gene3D" id="3.30.70.330">
    <property type="match status" value="1"/>
</dbReference>
<dbReference type="Gene3D" id="3.30.40.10">
    <property type="entry name" value="Zinc/RING finger domain, C3HC4 (zinc finger)"/>
    <property type="match status" value="2"/>
</dbReference>
<dbReference type="InterPro" id="IPR011422">
    <property type="entry name" value="BRAP2/ETP1_RRM"/>
</dbReference>
<dbReference type="InterPro" id="IPR034932">
    <property type="entry name" value="BRAP2_RRM"/>
</dbReference>
<dbReference type="InterPro" id="IPR012677">
    <property type="entry name" value="Nucleotide-bd_a/b_plait_sf"/>
</dbReference>
<dbReference type="InterPro" id="IPR035979">
    <property type="entry name" value="RBD_domain_sf"/>
</dbReference>
<dbReference type="InterPro" id="IPR047243">
    <property type="entry name" value="RING-H2_BRAP2"/>
</dbReference>
<dbReference type="InterPro" id="IPR001841">
    <property type="entry name" value="Znf_RING"/>
</dbReference>
<dbReference type="InterPro" id="IPR013083">
    <property type="entry name" value="Znf_RING/FYVE/PHD"/>
</dbReference>
<dbReference type="InterPro" id="IPR001607">
    <property type="entry name" value="Znf_UBP"/>
</dbReference>
<dbReference type="PANTHER" id="PTHR24007">
    <property type="entry name" value="BRCA1-ASSOCIATED PROTEIN"/>
    <property type="match status" value="1"/>
</dbReference>
<dbReference type="PANTHER" id="PTHR24007:SF7">
    <property type="entry name" value="BRCA1-ASSOCIATED PROTEIN"/>
    <property type="match status" value="1"/>
</dbReference>
<dbReference type="Pfam" id="PF07576">
    <property type="entry name" value="BRAP2"/>
    <property type="match status" value="1"/>
</dbReference>
<dbReference type="Pfam" id="PF13639">
    <property type="entry name" value="zf-RING_2"/>
    <property type="match status" value="1"/>
</dbReference>
<dbReference type="Pfam" id="PF02148">
    <property type="entry name" value="zf-UBP"/>
    <property type="match status" value="1"/>
</dbReference>
<dbReference type="SMART" id="SM00184">
    <property type="entry name" value="RING"/>
    <property type="match status" value="1"/>
</dbReference>
<dbReference type="SMART" id="SM00290">
    <property type="entry name" value="ZnF_UBP"/>
    <property type="match status" value="1"/>
</dbReference>
<dbReference type="SUPFAM" id="SSF57850">
    <property type="entry name" value="RING/U-box"/>
    <property type="match status" value="2"/>
</dbReference>
<dbReference type="SUPFAM" id="SSF54928">
    <property type="entry name" value="RNA-binding domain, RBD"/>
    <property type="match status" value="1"/>
</dbReference>
<dbReference type="PROSITE" id="PS50089">
    <property type="entry name" value="ZF_RING_2"/>
    <property type="match status" value="1"/>
</dbReference>
<dbReference type="PROSITE" id="PS50271">
    <property type="entry name" value="ZF_UBP"/>
    <property type="match status" value="1"/>
</dbReference>
<gene>
    <name evidence="12" type="primary">Brap</name>
</gene>
<reference evidence="9" key="1">
    <citation type="journal article" date="2003" name="Cancer Lett.">
        <title>BRPK, a novel protein kinase showing increased expression in mouse cancer cell lines with higher metastatic potential.</title>
        <authorList>
            <person name="Nakajima A."/>
            <person name="Kataoka K."/>
            <person name="Hong M."/>
            <person name="Sakaguchi M."/>
            <person name="Huh N.-H."/>
        </authorList>
    </citation>
    <scope>NUCLEOTIDE SEQUENCE [MRNA] (ISOFORMS 1 AND 2)</scope>
    <scope>TISSUE SPECIFICITY</scope>
    <source>
        <strain evidence="11">ICR</strain>
        <tissue evidence="11">Testis</tissue>
    </source>
</reference>
<reference evidence="9" key="2">
    <citation type="journal article" date="2004" name="Genome Res.">
        <title>The status, quality, and expansion of the NIH full-length cDNA project: the Mammalian Gene Collection (MGC).</title>
        <authorList>
            <consortium name="The MGC Project Team"/>
        </authorList>
    </citation>
    <scope>NUCLEOTIDE SEQUENCE [LARGE SCALE MRNA] (ISOFORM 3)</scope>
    <source>
        <strain evidence="10">FVB/N</strain>
        <tissue>Mammary tumor</tissue>
    </source>
</reference>
<reference key="3">
    <citation type="journal article" date="2005" name="Science">
        <title>The transcriptional landscape of the mammalian genome.</title>
        <authorList>
            <person name="Carninci P."/>
            <person name="Kasukawa T."/>
            <person name="Katayama S."/>
            <person name="Gough J."/>
            <person name="Frith M.C."/>
            <person name="Maeda N."/>
            <person name="Oyama R."/>
            <person name="Ravasi T."/>
            <person name="Lenhard B."/>
            <person name="Wells C."/>
            <person name="Kodzius R."/>
            <person name="Shimokawa K."/>
            <person name="Bajic V.B."/>
            <person name="Brenner S.E."/>
            <person name="Batalov S."/>
            <person name="Forrest A.R."/>
            <person name="Zavolan M."/>
            <person name="Davis M.J."/>
            <person name="Wilming L.G."/>
            <person name="Aidinis V."/>
            <person name="Allen J.E."/>
            <person name="Ambesi-Impiombato A."/>
            <person name="Apweiler R."/>
            <person name="Aturaliya R.N."/>
            <person name="Bailey T.L."/>
            <person name="Bansal M."/>
            <person name="Baxter L."/>
            <person name="Beisel K.W."/>
            <person name="Bersano T."/>
            <person name="Bono H."/>
            <person name="Chalk A.M."/>
            <person name="Chiu K.P."/>
            <person name="Choudhary V."/>
            <person name="Christoffels A."/>
            <person name="Clutterbuck D.R."/>
            <person name="Crowe M.L."/>
            <person name="Dalla E."/>
            <person name="Dalrymple B.P."/>
            <person name="de Bono B."/>
            <person name="Della Gatta G."/>
            <person name="di Bernardo D."/>
            <person name="Down T."/>
            <person name="Engstrom P."/>
            <person name="Fagiolini M."/>
            <person name="Faulkner G."/>
            <person name="Fletcher C.F."/>
            <person name="Fukushima T."/>
            <person name="Furuno M."/>
            <person name="Futaki S."/>
            <person name="Gariboldi M."/>
            <person name="Georgii-Hemming P."/>
            <person name="Gingeras T.R."/>
            <person name="Gojobori T."/>
            <person name="Green R.E."/>
            <person name="Gustincich S."/>
            <person name="Harbers M."/>
            <person name="Hayashi Y."/>
            <person name="Hensch T.K."/>
            <person name="Hirokawa N."/>
            <person name="Hill D."/>
            <person name="Huminiecki L."/>
            <person name="Iacono M."/>
            <person name="Ikeo K."/>
            <person name="Iwama A."/>
            <person name="Ishikawa T."/>
            <person name="Jakt M."/>
            <person name="Kanapin A."/>
            <person name="Katoh M."/>
            <person name="Kawasawa Y."/>
            <person name="Kelso J."/>
            <person name="Kitamura H."/>
            <person name="Kitano H."/>
            <person name="Kollias G."/>
            <person name="Krishnan S.P."/>
            <person name="Kruger A."/>
            <person name="Kummerfeld S.K."/>
            <person name="Kurochkin I.V."/>
            <person name="Lareau L.F."/>
            <person name="Lazarevic D."/>
            <person name="Lipovich L."/>
            <person name="Liu J."/>
            <person name="Liuni S."/>
            <person name="McWilliam S."/>
            <person name="Madan Babu M."/>
            <person name="Madera M."/>
            <person name="Marchionni L."/>
            <person name="Matsuda H."/>
            <person name="Matsuzawa S."/>
            <person name="Miki H."/>
            <person name="Mignone F."/>
            <person name="Miyake S."/>
            <person name="Morris K."/>
            <person name="Mottagui-Tabar S."/>
            <person name="Mulder N."/>
            <person name="Nakano N."/>
            <person name="Nakauchi H."/>
            <person name="Ng P."/>
            <person name="Nilsson R."/>
            <person name="Nishiguchi S."/>
            <person name="Nishikawa S."/>
            <person name="Nori F."/>
            <person name="Ohara O."/>
            <person name="Okazaki Y."/>
            <person name="Orlando V."/>
            <person name="Pang K.C."/>
            <person name="Pavan W.J."/>
            <person name="Pavesi G."/>
            <person name="Pesole G."/>
            <person name="Petrovsky N."/>
            <person name="Piazza S."/>
            <person name="Reed J."/>
            <person name="Reid J.F."/>
            <person name="Ring B.Z."/>
            <person name="Ringwald M."/>
            <person name="Rost B."/>
            <person name="Ruan Y."/>
            <person name="Salzberg S.L."/>
            <person name="Sandelin A."/>
            <person name="Schneider C."/>
            <person name="Schoenbach C."/>
            <person name="Sekiguchi K."/>
            <person name="Semple C.A."/>
            <person name="Seno S."/>
            <person name="Sessa L."/>
            <person name="Sheng Y."/>
            <person name="Shibata Y."/>
            <person name="Shimada H."/>
            <person name="Shimada K."/>
            <person name="Silva D."/>
            <person name="Sinclair B."/>
            <person name="Sperling S."/>
            <person name="Stupka E."/>
            <person name="Sugiura K."/>
            <person name="Sultana R."/>
            <person name="Takenaka Y."/>
            <person name="Taki K."/>
            <person name="Tammoja K."/>
            <person name="Tan S.L."/>
            <person name="Tang S."/>
            <person name="Taylor M.S."/>
            <person name="Tegner J."/>
            <person name="Teichmann S.A."/>
            <person name="Ueda H.R."/>
            <person name="van Nimwegen E."/>
            <person name="Verardo R."/>
            <person name="Wei C.L."/>
            <person name="Yagi K."/>
            <person name="Yamanishi H."/>
            <person name="Zabarovsky E."/>
            <person name="Zhu S."/>
            <person name="Zimmer A."/>
            <person name="Hide W."/>
            <person name="Bult C."/>
            <person name="Grimmond S.M."/>
            <person name="Teasdale R.D."/>
            <person name="Liu E.T."/>
            <person name="Brusic V."/>
            <person name="Quackenbush J."/>
            <person name="Wahlestedt C."/>
            <person name="Mattick J.S."/>
            <person name="Hume D.A."/>
            <person name="Kai C."/>
            <person name="Sasaki D."/>
            <person name="Tomaru Y."/>
            <person name="Fukuda S."/>
            <person name="Kanamori-Katayama M."/>
            <person name="Suzuki M."/>
            <person name="Aoki J."/>
            <person name="Arakawa T."/>
            <person name="Iida J."/>
            <person name="Imamura K."/>
            <person name="Itoh M."/>
            <person name="Kato T."/>
            <person name="Kawaji H."/>
            <person name="Kawagashira N."/>
            <person name="Kawashima T."/>
            <person name="Kojima M."/>
            <person name="Kondo S."/>
            <person name="Konno H."/>
            <person name="Nakano K."/>
            <person name="Ninomiya N."/>
            <person name="Nishio T."/>
            <person name="Okada M."/>
            <person name="Plessy C."/>
            <person name="Shibata K."/>
            <person name="Shiraki T."/>
            <person name="Suzuki S."/>
            <person name="Tagami M."/>
            <person name="Waki K."/>
            <person name="Watahiki A."/>
            <person name="Okamura-Oho Y."/>
            <person name="Suzuki H."/>
            <person name="Kawai J."/>
            <person name="Hayashizaki Y."/>
        </authorList>
    </citation>
    <scope>NUCLEOTIDE SEQUENCE [LARGE SCALE MRNA] OF 102-591 (ISOFORMS 1/2)</scope>
    <source>
        <strain>C57BL/6J</strain>
        <tissue>Diencephalon</tissue>
        <tissue>Embryo</tissue>
    </source>
</reference>
<name>BRAP_MOUSE</name>